<reference key="1">
    <citation type="journal article" date="2007" name="PLoS Genet.">
        <title>Patterns and implications of gene gain and loss in the evolution of Prochlorococcus.</title>
        <authorList>
            <person name="Kettler G.C."/>
            <person name="Martiny A.C."/>
            <person name="Huang K."/>
            <person name="Zucker J."/>
            <person name="Coleman M.L."/>
            <person name="Rodrigue S."/>
            <person name="Chen F."/>
            <person name="Lapidus A."/>
            <person name="Ferriera S."/>
            <person name="Johnson J."/>
            <person name="Steglich C."/>
            <person name="Church G.M."/>
            <person name="Richardson P."/>
            <person name="Chisholm S.W."/>
        </authorList>
    </citation>
    <scope>NUCLEOTIDE SEQUENCE [LARGE SCALE GENOMIC DNA]</scope>
    <source>
        <strain>AS9601</strain>
    </source>
</reference>
<protein>
    <recommendedName>
        <fullName evidence="1">Ribosome-binding factor A</fullName>
    </recommendedName>
</protein>
<sequence>MPNNYRLEKVSSLLKKEITLILQNDLENDLIRDHFVNISKIDLSGDLQHCKIYITSTAQEKVRTEIVENLNTAKSSIRHSLGKRIEMRRVPEIIFKDDVVLDKGLSVLKLLDELKNKNQNHNVEDKDAKS</sequence>
<keyword id="KW-0963">Cytoplasm</keyword>
<keyword id="KW-0690">Ribosome biogenesis</keyword>
<evidence type="ECO:0000255" key="1">
    <source>
        <dbReference type="HAMAP-Rule" id="MF_00003"/>
    </source>
</evidence>
<feature type="chain" id="PRO_1000000169" description="Ribosome-binding factor A">
    <location>
        <begin position="1"/>
        <end position="130"/>
    </location>
</feature>
<proteinExistence type="inferred from homology"/>
<gene>
    <name evidence="1" type="primary">rbfA</name>
    <name type="ordered locus">A9601_01301</name>
</gene>
<dbReference type="EMBL" id="CP000551">
    <property type="protein sequence ID" value="ABM69418.1"/>
    <property type="molecule type" value="Genomic_DNA"/>
</dbReference>
<dbReference type="RefSeq" id="WP_011817605.1">
    <property type="nucleotide sequence ID" value="NC_008816.1"/>
</dbReference>
<dbReference type="SMR" id="A2BNQ7"/>
<dbReference type="STRING" id="146891.A9601_01301"/>
<dbReference type="KEGG" id="pmb:A9601_01301"/>
<dbReference type="eggNOG" id="COG0858">
    <property type="taxonomic scope" value="Bacteria"/>
</dbReference>
<dbReference type="HOGENOM" id="CLU_089475_2_1_3"/>
<dbReference type="OrthoDB" id="307788at2"/>
<dbReference type="Proteomes" id="UP000002590">
    <property type="component" value="Chromosome"/>
</dbReference>
<dbReference type="GO" id="GO:0005829">
    <property type="term" value="C:cytosol"/>
    <property type="evidence" value="ECO:0007669"/>
    <property type="project" value="TreeGrafter"/>
</dbReference>
<dbReference type="GO" id="GO:0043024">
    <property type="term" value="F:ribosomal small subunit binding"/>
    <property type="evidence" value="ECO:0007669"/>
    <property type="project" value="TreeGrafter"/>
</dbReference>
<dbReference type="GO" id="GO:0030490">
    <property type="term" value="P:maturation of SSU-rRNA"/>
    <property type="evidence" value="ECO:0007669"/>
    <property type="project" value="UniProtKB-UniRule"/>
</dbReference>
<dbReference type="Gene3D" id="3.30.300.20">
    <property type="match status" value="1"/>
</dbReference>
<dbReference type="HAMAP" id="MF_00003">
    <property type="entry name" value="RbfA"/>
    <property type="match status" value="1"/>
</dbReference>
<dbReference type="InterPro" id="IPR015946">
    <property type="entry name" value="KH_dom-like_a/b"/>
</dbReference>
<dbReference type="InterPro" id="IPR000238">
    <property type="entry name" value="RbfA"/>
</dbReference>
<dbReference type="InterPro" id="IPR023799">
    <property type="entry name" value="RbfA_dom_sf"/>
</dbReference>
<dbReference type="InterPro" id="IPR020053">
    <property type="entry name" value="Ribosome-bd_factorA_CS"/>
</dbReference>
<dbReference type="NCBIfam" id="TIGR00082">
    <property type="entry name" value="rbfA"/>
    <property type="match status" value="1"/>
</dbReference>
<dbReference type="PANTHER" id="PTHR33515">
    <property type="entry name" value="RIBOSOME-BINDING FACTOR A, CHLOROPLASTIC-RELATED"/>
    <property type="match status" value="1"/>
</dbReference>
<dbReference type="PANTHER" id="PTHR33515:SF1">
    <property type="entry name" value="RIBOSOME-BINDING FACTOR A, CHLOROPLASTIC-RELATED"/>
    <property type="match status" value="1"/>
</dbReference>
<dbReference type="Pfam" id="PF02033">
    <property type="entry name" value="RBFA"/>
    <property type="match status" value="1"/>
</dbReference>
<dbReference type="SUPFAM" id="SSF89919">
    <property type="entry name" value="Ribosome-binding factor A, RbfA"/>
    <property type="match status" value="1"/>
</dbReference>
<dbReference type="PROSITE" id="PS01319">
    <property type="entry name" value="RBFA"/>
    <property type="match status" value="1"/>
</dbReference>
<name>RBFA_PROMS</name>
<organism>
    <name type="scientific">Prochlorococcus marinus (strain AS9601)</name>
    <dbReference type="NCBI Taxonomy" id="146891"/>
    <lineage>
        <taxon>Bacteria</taxon>
        <taxon>Bacillati</taxon>
        <taxon>Cyanobacteriota</taxon>
        <taxon>Cyanophyceae</taxon>
        <taxon>Synechococcales</taxon>
        <taxon>Prochlorococcaceae</taxon>
        <taxon>Prochlorococcus</taxon>
    </lineage>
</organism>
<comment type="function">
    <text evidence="1">One of several proteins that assist in the late maturation steps of the functional core of the 30S ribosomal subunit. Associates with free 30S ribosomal subunits (but not with 30S subunits that are part of 70S ribosomes or polysomes). Required for efficient processing of 16S rRNA. May interact with the 5'-terminal helix region of 16S rRNA.</text>
</comment>
<comment type="subunit">
    <text evidence="1">Monomer. Binds 30S ribosomal subunits, but not 50S ribosomal subunits or 70S ribosomes.</text>
</comment>
<comment type="subcellular location">
    <subcellularLocation>
        <location evidence="1">Cytoplasm</location>
    </subcellularLocation>
</comment>
<comment type="similarity">
    <text evidence="1">Belongs to the RbfA family.</text>
</comment>
<accession>A2BNQ7</accession>